<name>EI2BE_YEAST</name>
<organism>
    <name type="scientific">Saccharomyces cerevisiae (strain ATCC 204508 / S288c)</name>
    <name type="common">Baker's yeast</name>
    <dbReference type="NCBI Taxonomy" id="559292"/>
    <lineage>
        <taxon>Eukaryota</taxon>
        <taxon>Fungi</taxon>
        <taxon>Dikarya</taxon>
        <taxon>Ascomycota</taxon>
        <taxon>Saccharomycotina</taxon>
        <taxon>Saccharomycetes</taxon>
        <taxon>Saccharomycetales</taxon>
        <taxon>Saccharomycetaceae</taxon>
        <taxon>Saccharomyces</taxon>
    </lineage>
</organism>
<dbReference type="EMBL" id="L07115">
    <property type="protein sequence ID" value="AAA65498.1"/>
    <property type="molecule type" value="Genomic_DNA"/>
</dbReference>
<dbReference type="EMBL" id="Z68194">
    <property type="protein sequence ID" value="CAA92354.1"/>
    <property type="molecule type" value="Genomic_DNA"/>
</dbReference>
<dbReference type="EMBL" id="Z68195">
    <property type="protein sequence ID" value="CAA92362.1"/>
    <property type="molecule type" value="Genomic_DNA"/>
</dbReference>
<dbReference type="EMBL" id="BK006938">
    <property type="protein sequence ID" value="DAA12055.1"/>
    <property type="molecule type" value="Genomic_DNA"/>
</dbReference>
<dbReference type="PIR" id="A48156">
    <property type="entry name" value="A48156"/>
</dbReference>
<dbReference type="RefSeq" id="NP_010497.3">
    <property type="nucleotide sequence ID" value="NM_001180519.3"/>
</dbReference>
<dbReference type="PDB" id="1PAQ">
    <property type="method" value="X-ray"/>
    <property type="resolution" value="2.30 A"/>
    <property type="chains" value="A=524-712"/>
</dbReference>
<dbReference type="PDB" id="6I3M">
    <property type="method" value="EM"/>
    <property type="resolution" value="3.93 A"/>
    <property type="chains" value="G/H=1-712"/>
</dbReference>
<dbReference type="PDB" id="6I7T">
    <property type="method" value="EM"/>
    <property type="resolution" value="4.61 A"/>
    <property type="chains" value="G/H=1-712"/>
</dbReference>
<dbReference type="PDB" id="6QG0">
    <property type="method" value="EM"/>
    <property type="resolution" value="4.20 A"/>
    <property type="chains" value="I/J=1-712"/>
</dbReference>
<dbReference type="PDB" id="6QG1">
    <property type="method" value="EM"/>
    <property type="resolution" value="4.20 A"/>
    <property type="chains" value="I/J=1-712"/>
</dbReference>
<dbReference type="PDB" id="6QG2">
    <property type="method" value="EM"/>
    <property type="resolution" value="4.60 A"/>
    <property type="chains" value="I/J=1-712"/>
</dbReference>
<dbReference type="PDB" id="6QG3">
    <property type="method" value="EM"/>
    <property type="resolution" value="9.40 A"/>
    <property type="chains" value="I/J=1-712"/>
</dbReference>
<dbReference type="PDB" id="6QG5">
    <property type="method" value="EM"/>
    <property type="resolution" value="10.10 A"/>
    <property type="chains" value="I/J=1-712"/>
</dbReference>
<dbReference type="PDB" id="6QG6">
    <property type="method" value="EM"/>
    <property type="resolution" value="4.65 A"/>
    <property type="chains" value="I/J=1-712"/>
</dbReference>
<dbReference type="PDBsum" id="1PAQ"/>
<dbReference type="PDBsum" id="6I3M"/>
<dbReference type="PDBsum" id="6I7T"/>
<dbReference type="PDBsum" id="6QG0"/>
<dbReference type="PDBsum" id="6QG1"/>
<dbReference type="PDBsum" id="6QG2"/>
<dbReference type="PDBsum" id="6QG3"/>
<dbReference type="PDBsum" id="6QG5"/>
<dbReference type="PDBsum" id="6QG6"/>
<dbReference type="EMDB" id="EMD-4404"/>
<dbReference type="EMDB" id="EMD-4428"/>
<dbReference type="EMDB" id="EMD-4543"/>
<dbReference type="EMDB" id="EMD-4544"/>
<dbReference type="EMDB" id="EMD-4545"/>
<dbReference type="EMDB" id="EMD-4546"/>
<dbReference type="EMDB" id="EMD-4547"/>
<dbReference type="EMDB" id="EMD-4548"/>
<dbReference type="SMR" id="P32501"/>
<dbReference type="BioGRID" id="32265">
    <property type="interactions" value="128"/>
</dbReference>
<dbReference type="ComplexPortal" id="CPX-429">
    <property type="entry name" value="Eukaryotic translation initiation factor 2B complex"/>
</dbReference>
<dbReference type="DIP" id="DIP-2328N"/>
<dbReference type="FunCoup" id="P32501">
    <property type="interactions" value="1435"/>
</dbReference>
<dbReference type="IntAct" id="P32501">
    <property type="interactions" value="31"/>
</dbReference>
<dbReference type="MINT" id="P32501"/>
<dbReference type="STRING" id="4932.YDR211W"/>
<dbReference type="iPTMnet" id="P32501"/>
<dbReference type="PaxDb" id="4932-YDR211W"/>
<dbReference type="PeptideAtlas" id="P32501"/>
<dbReference type="EnsemblFungi" id="YDR211W_mRNA">
    <property type="protein sequence ID" value="YDR211W"/>
    <property type="gene ID" value="YDR211W"/>
</dbReference>
<dbReference type="GeneID" id="851797"/>
<dbReference type="KEGG" id="sce:YDR211W"/>
<dbReference type="AGR" id="SGD:S000002619"/>
<dbReference type="SGD" id="S000002619">
    <property type="gene designation" value="GCD6"/>
</dbReference>
<dbReference type="VEuPathDB" id="FungiDB:YDR211W"/>
<dbReference type="eggNOG" id="KOG1461">
    <property type="taxonomic scope" value="Eukaryota"/>
</dbReference>
<dbReference type="GeneTree" id="ENSGT00510000047568"/>
<dbReference type="HOGENOM" id="CLU_012507_1_0_1"/>
<dbReference type="InParanoid" id="P32501"/>
<dbReference type="OMA" id="LAQSCKI"/>
<dbReference type="OrthoDB" id="424572at2759"/>
<dbReference type="BioCyc" id="YEAST:G3O-29793-MONOMER"/>
<dbReference type="BRENDA" id="3.6.5.3">
    <property type="organism ID" value="984"/>
</dbReference>
<dbReference type="Reactome" id="R-SCE-72731">
    <property type="pathway name" value="Recycling of eIF2:GDP"/>
</dbReference>
<dbReference type="BioGRID-ORCS" id="851797">
    <property type="hits" value="2 hits in 10 CRISPR screens"/>
</dbReference>
<dbReference type="CD-CODE" id="A777E0F8">
    <property type="entry name" value="P-body"/>
</dbReference>
<dbReference type="EvolutionaryTrace" id="P32501"/>
<dbReference type="PRO" id="PR:P32501"/>
<dbReference type="Proteomes" id="UP000002311">
    <property type="component" value="Chromosome IV"/>
</dbReference>
<dbReference type="RNAct" id="P32501">
    <property type="molecule type" value="protein"/>
</dbReference>
<dbReference type="GO" id="GO:0005737">
    <property type="term" value="C:cytoplasm"/>
    <property type="evidence" value="ECO:0007005"/>
    <property type="project" value="SGD"/>
</dbReference>
<dbReference type="GO" id="GO:0005829">
    <property type="term" value="C:cytosol"/>
    <property type="evidence" value="ECO:0007005"/>
    <property type="project" value="SGD"/>
</dbReference>
<dbReference type="GO" id="GO:0005851">
    <property type="term" value="C:eukaryotic translation initiation factor 2B complex"/>
    <property type="evidence" value="ECO:0000314"/>
    <property type="project" value="SGD"/>
</dbReference>
<dbReference type="GO" id="GO:0032045">
    <property type="term" value="C:guanyl-nucleotide exchange factor complex"/>
    <property type="evidence" value="ECO:0000314"/>
    <property type="project" value="ComplexPortal"/>
</dbReference>
<dbReference type="GO" id="GO:0005085">
    <property type="term" value="F:guanyl-nucleotide exchange factor activity"/>
    <property type="evidence" value="ECO:0000314"/>
    <property type="project" value="SGD"/>
</dbReference>
<dbReference type="GO" id="GO:0003743">
    <property type="term" value="F:translation initiation factor activity"/>
    <property type="evidence" value="ECO:0000316"/>
    <property type="project" value="SGD"/>
</dbReference>
<dbReference type="GO" id="GO:0031369">
    <property type="term" value="F:translation initiation factor binding"/>
    <property type="evidence" value="ECO:0000318"/>
    <property type="project" value="GO_Central"/>
</dbReference>
<dbReference type="GO" id="GO:0002183">
    <property type="term" value="P:cytoplasmic translational initiation"/>
    <property type="evidence" value="ECO:0000250"/>
    <property type="project" value="UniProtKB"/>
</dbReference>
<dbReference type="GO" id="GO:0006446">
    <property type="term" value="P:regulation of translational initiation"/>
    <property type="evidence" value="ECO:0000314"/>
    <property type="project" value="SGD"/>
</dbReference>
<dbReference type="CDD" id="cd04197">
    <property type="entry name" value="eIF-2B_epsilon_N"/>
    <property type="match status" value="1"/>
</dbReference>
<dbReference type="CDD" id="cd05787">
    <property type="entry name" value="LbH_eIF2B_epsilon"/>
    <property type="match status" value="1"/>
</dbReference>
<dbReference type="CDD" id="cd11558">
    <property type="entry name" value="W2_eIF2B_epsilon"/>
    <property type="match status" value="1"/>
</dbReference>
<dbReference type="FunFam" id="1.25.40.180:FF:000022">
    <property type="entry name" value="Translation initiation factor eIF-2B epsilon subunit"/>
    <property type="match status" value="1"/>
</dbReference>
<dbReference type="FunFam" id="3.90.550.10:FF:000066">
    <property type="entry name" value="Translation initiation factor eIF-2B subunit epsilon"/>
    <property type="match status" value="1"/>
</dbReference>
<dbReference type="FunFam" id="2.160.10.10:FF:000042">
    <property type="entry name" value="Translation initiation factor eIF2B subunit"/>
    <property type="match status" value="1"/>
</dbReference>
<dbReference type="Gene3D" id="1.25.40.180">
    <property type="match status" value="1"/>
</dbReference>
<dbReference type="Gene3D" id="2.160.10.10">
    <property type="entry name" value="Hexapeptide repeat proteins"/>
    <property type="match status" value="1"/>
</dbReference>
<dbReference type="Gene3D" id="3.90.550.10">
    <property type="entry name" value="Spore Coat Polysaccharide Biosynthesis Protein SpsA, Chain A"/>
    <property type="match status" value="1"/>
</dbReference>
<dbReference type="InterPro" id="IPR016024">
    <property type="entry name" value="ARM-type_fold"/>
</dbReference>
<dbReference type="InterPro" id="IPR035543">
    <property type="entry name" value="eIF-2B_epsilon_N"/>
</dbReference>
<dbReference type="InterPro" id="IPR051956">
    <property type="entry name" value="eIF2B_epsilon"/>
</dbReference>
<dbReference type="InterPro" id="IPR005835">
    <property type="entry name" value="NTP_transferase_dom"/>
</dbReference>
<dbReference type="InterPro" id="IPR029044">
    <property type="entry name" value="Nucleotide-diphossugar_trans"/>
</dbReference>
<dbReference type="InterPro" id="IPR011004">
    <property type="entry name" value="Trimer_LpxA-like_sf"/>
</dbReference>
<dbReference type="InterPro" id="IPR003307">
    <property type="entry name" value="W2_domain"/>
</dbReference>
<dbReference type="InterPro" id="IPR044123">
    <property type="entry name" value="W2_eIF2B_epsilon"/>
</dbReference>
<dbReference type="PANTHER" id="PTHR45887">
    <property type="entry name" value="TRANSLATION INITIATION FACTOR EIF-2B SUBUNIT EPSILON"/>
    <property type="match status" value="1"/>
</dbReference>
<dbReference type="PANTHER" id="PTHR45887:SF1">
    <property type="entry name" value="TRANSLATION INITIATION FACTOR EIF-2B SUBUNIT EPSILON"/>
    <property type="match status" value="1"/>
</dbReference>
<dbReference type="Pfam" id="PF25084">
    <property type="entry name" value="LbH_EIF2B"/>
    <property type="match status" value="1"/>
</dbReference>
<dbReference type="Pfam" id="PF00483">
    <property type="entry name" value="NTP_transferase"/>
    <property type="match status" value="1"/>
</dbReference>
<dbReference type="Pfam" id="PF02020">
    <property type="entry name" value="W2"/>
    <property type="match status" value="1"/>
</dbReference>
<dbReference type="SMART" id="SM00515">
    <property type="entry name" value="eIF5C"/>
    <property type="match status" value="1"/>
</dbReference>
<dbReference type="SUPFAM" id="SSF48371">
    <property type="entry name" value="ARM repeat"/>
    <property type="match status" value="1"/>
</dbReference>
<dbReference type="SUPFAM" id="SSF53448">
    <property type="entry name" value="Nucleotide-diphospho-sugar transferases"/>
    <property type="match status" value="1"/>
</dbReference>
<dbReference type="SUPFAM" id="SSF51161">
    <property type="entry name" value="Trimeric LpxA-like enzymes"/>
    <property type="match status" value="1"/>
</dbReference>
<dbReference type="PROSITE" id="PS51363">
    <property type="entry name" value="W2"/>
    <property type="match status" value="1"/>
</dbReference>
<proteinExistence type="evidence at protein level"/>
<evidence type="ECO:0000250" key="1">
    <source>
        <dbReference type="UniProtKB" id="P56287"/>
    </source>
</evidence>
<evidence type="ECO:0000255" key="2">
    <source>
        <dbReference type="PROSITE-ProRule" id="PRU00695"/>
    </source>
</evidence>
<evidence type="ECO:0000256" key="3">
    <source>
        <dbReference type="SAM" id="MobiDB-lite"/>
    </source>
</evidence>
<evidence type="ECO:0000269" key="4">
    <source>
    </source>
</evidence>
<evidence type="ECO:0000269" key="5">
    <source>
    </source>
</evidence>
<evidence type="ECO:0000269" key="6">
    <source>
    </source>
</evidence>
<evidence type="ECO:0000269" key="7">
    <source>
    </source>
</evidence>
<evidence type="ECO:0000269" key="8">
    <source>
    </source>
</evidence>
<evidence type="ECO:0000269" key="9">
    <source>
    </source>
</evidence>
<evidence type="ECO:0000269" key="10">
    <source>
    </source>
</evidence>
<evidence type="ECO:0000305" key="11"/>
<evidence type="ECO:0007744" key="12">
    <source>
    </source>
</evidence>
<evidence type="ECO:0007744" key="13">
    <source>
    </source>
</evidence>
<evidence type="ECO:0007744" key="14">
    <source>
    </source>
</evidence>
<evidence type="ECO:0007829" key="15">
    <source>
        <dbReference type="PDB" id="1PAQ"/>
    </source>
</evidence>
<gene>
    <name type="primary">GCD6</name>
    <name type="synonym">TIF225</name>
    <name type="ordered locus">YDR211W</name>
    <name type="ORF">YD8142.12</name>
    <name type="ORF">YD8142B.03</name>
</gene>
<protein>
    <recommendedName>
        <fullName>Translation initiation factor eIF2B subunit epsilon</fullName>
    </recommendedName>
    <alternativeName>
        <fullName>GCD complex subunit GCD6</fullName>
    </alternativeName>
    <alternativeName>
        <fullName>Guanine nucleotide exchange factor subunit GCD6</fullName>
    </alternativeName>
    <alternativeName>
        <fullName>eIF2B GDP-GTP exchange factor subunit epsilon</fullName>
    </alternativeName>
</protein>
<comment type="function">
    <text evidence="1 9 10">Acts as a catalytic component of the translation initiation factor 2B (eIF2B) complex, which catalyzes the exchange of GDP for GTP on eukaryotic initiation factor 2 (eIF2) and is regulated by phosphorylated eIF2. Its guanine nucleotide exchange factor activity is repressed when bound to eIF2 complex phosphorylated on the alpha subunit, thereby limiting the amount of methionyl-initiator methionine tRNA available to the ribosome and consequently global translation is repressed (By similarity). It activates the synthesis of GCN4 in yeast under amino acid starvation conditions by suppressing the inhibitory effects of multiple AUG codons present in the leader of GCN4 mRNA. It may promote either repression or activation of GCN4 expression depending on amino acid availability. GCD6 and GCD7 repress GCN4 expression at the translational level by ensuring that ribosomes which have translated UORF1 will reinitiate at UORF2, -3, or -4 and thus fail to reach the GCN4 start site.</text>
</comment>
<comment type="subunit">
    <text evidence="1 4 8 9 10">Component of the translation initiation factor 2B (eIF2B) complex which is a heterodecamer of two sets of five different subunits: alpha, beta, gamma, delta and epsilon. Subunits alpha, beta and delta comprise a regulatory subcomplex and subunits epsilon and gamma comprise a catalytic subcomplex (PubMed:10075937, PubMed:35031321, PubMed:8506384, PubMed:9472020). Within the complex, the hexameric regulatory complex resides at the center, with the two heterodimeric catalytic subcomplexes bound on opposite sides (By similarity).</text>
</comment>
<comment type="interaction">
    <interactant intactId="EBI-6270">
        <id>P32501</id>
    </interactant>
    <interactant intactId="EBI-6275">
        <id>P09032</id>
        <label>GCD1</label>
    </interactant>
    <organismsDiffer>false</organismsDiffer>
    <experiments>9</experiments>
</comment>
<comment type="subcellular location">
    <subcellularLocation>
        <location evidence="1">Cytoplasm</location>
        <location evidence="1">Cytosol</location>
    </subcellularLocation>
</comment>
<comment type="miscellaneous">
    <text evidence="6">Present with 33800 molecules/cell in log phase SD medium.</text>
</comment>
<comment type="similarity">
    <text evidence="11">Belongs to the eIF-2B gamma/epsilon subunits family.</text>
</comment>
<feature type="chain" id="PRO_0000156078" description="Translation initiation factor eIF2B subunit epsilon">
    <location>
        <begin position="1"/>
        <end position="712"/>
    </location>
</feature>
<feature type="domain" description="W2" evidence="2">
    <location>
        <begin position="539"/>
        <end position="710"/>
    </location>
</feature>
<feature type="region of interest" description="Disordered" evidence="3">
    <location>
        <begin position="1"/>
        <end position="20"/>
    </location>
</feature>
<feature type="modified residue" description="Phosphoserine" evidence="12 14">
    <location>
        <position position="478"/>
    </location>
</feature>
<feature type="modified residue" description="Phosphoserine" evidence="12 14">
    <location>
        <position position="481"/>
    </location>
</feature>
<feature type="modified residue" description="Phosphoserine" evidence="12">
    <location>
        <position position="507"/>
    </location>
</feature>
<feature type="modified residue" description="Phosphoserine" evidence="14">
    <location>
        <position position="525"/>
    </location>
</feature>
<feature type="modified residue" description="Phosphoserine" evidence="13 14">
    <location>
        <position position="538"/>
    </location>
</feature>
<feature type="modified residue" description="Phosphoserine" evidence="14">
    <location>
        <position position="707"/>
    </location>
</feature>
<feature type="mutagenesis site" description="Reduced exchange activity." evidence="5">
    <original>T</original>
    <variation>I</variation>
    <location>
        <position position="552"/>
    </location>
</feature>
<feature type="mutagenesis site" description="Lethal." evidence="7">
    <original>E</original>
    <variation>A</variation>
    <location>
        <position position="569"/>
    </location>
</feature>
<feature type="mutagenesis site" description="Reduced exchange activity." evidence="5">
    <original>S</original>
    <variation>N</variation>
    <location>
        <position position="576"/>
    </location>
</feature>
<feature type="mutagenesis site" description="Abolishes binding to SUI3." evidence="4">
    <original>LFSALVSLYDNDIIEEDVIYKWW</original>
    <variation>AFSAAVSAADNDAAEAAVAAKWA</variation>
    <location>
        <begin position="655"/>
        <end position="677"/>
    </location>
</feature>
<feature type="mutagenesis site" description="Abolishes binding to SUI3; probably impairs the conversion of eIF-2-GDP to eIF-2-GTP." evidence="4">
    <original>WVEWLQNADEE</original>
    <variation>AAEAAQNAAAA</variation>
    <location>
        <begin position="696"/>
        <end position="706"/>
    </location>
</feature>
<feature type="helix" evidence="15">
    <location>
        <begin position="545"/>
        <end position="558"/>
    </location>
</feature>
<feature type="helix" evidence="15">
    <location>
        <begin position="563"/>
        <end position="576"/>
    </location>
</feature>
<feature type="helix" evidence="15">
    <location>
        <begin position="581"/>
        <end position="601"/>
    </location>
</feature>
<feature type="helix" evidence="15">
    <location>
        <begin position="607"/>
        <end position="618"/>
    </location>
</feature>
<feature type="helix" evidence="15">
    <location>
        <begin position="619"/>
        <end position="624"/>
    </location>
</feature>
<feature type="helix" evidence="15">
    <location>
        <begin position="629"/>
        <end position="646"/>
    </location>
</feature>
<feature type="helix" evidence="15">
    <location>
        <begin position="651"/>
        <end position="664"/>
    </location>
</feature>
<feature type="helix" evidence="15">
    <location>
        <begin position="670"/>
        <end position="678"/>
    </location>
</feature>
<feature type="helix" evidence="15">
    <location>
        <begin position="684"/>
        <end position="686"/>
    </location>
</feature>
<feature type="helix" evidence="15">
    <location>
        <begin position="687"/>
        <end position="702"/>
    </location>
</feature>
<sequence length="712" mass="81161">MAGKKGQKKSGLGNHGKNSDMDVEDRLQAVVLTDSYETRFMPLTAVKPRCLLPLANVPLIEYTLEFLAKAGVHEVFLICSSHANQINDYIENSKWNLPWSPFKITTIMSPEARCTGDVMRDLDNRGIITGDFILVSGDVLTNIDFSKMLEFHKKMHLQDKDHISTMCLSKASTYPKTRTIEPAAFVLDKSTSRCIYYQDLPLPSSREKTSIQIDPELLDNVDEFVIRNDLIDCRIDICTSHVPLIFQENFDYQSLRTDFVKGVISSDILGKHIYAYLTDEYAVRVESWQTYDTISQDFLGRWCYPLVLDSNIQDDQTYSYESRHIYKEKDVVLAQSCKIGKCTAIGSGTKIGEGTKIENSVIGRNCQIGENIRIKNSFIWDDCIIGNNSIIDHSLIASNATLGSNVRLNDGCIIGFNVKIDDNMDLDRNTKISASPLKNAGSRMYDNESNEQFDQDLDDQTLAVSIVGDKGVGYIYESEVSDDEDSSTEACKEINTLSNQLDELYLSDDSISSATKKTKKRRTMSVNSIYTDREEIDSEFEDEDFEKEGIATVERAMENNHDLDTALLELNTLRMSMNVTYHEVRIATITALLRRVYHFIATQTLGPKDAVVKVFNQWGLLFKRQAFDEEEYIDLMNIIMEKIVEQSFDKPDLILFSALVSLYDNDIIEEDVIYKWWDNVSTDPRYDEVKKLTVKWVEWLQNADEESSSEEE</sequence>
<reference key="1">
    <citation type="journal article" date="1993" name="Mol. Cell. Biol.">
        <title>Evidence that GCD6 and GCD7, translational regulators of GCN4, are subunits of the guanine nucleotide exchange factor for eIF-2 in Saccharomyces cerevisiae.</title>
        <authorList>
            <person name="Bushman J.L."/>
            <person name="Asuru A.I."/>
            <person name="Matts R.L."/>
            <person name="Hinnebusch A.G."/>
        </authorList>
    </citation>
    <scope>NUCLEOTIDE SEQUENCE [GENOMIC DNA]</scope>
</reference>
<reference key="2">
    <citation type="journal article" date="1997" name="Nature">
        <title>The nucleotide sequence of Saccharomyces cerevisiae chromosome IV.</title>
        <authorList>
            <person name="Jacq C."/>
            <person name="Alt-Moerbe J."/>
            <person name="Andre B."/>
            <person name="Arnold W."/>
            <person name="Bahr A."/>
            <person name="Ballesta J.P.G."/>
            <person name="Bargues M."/>
            <person name="Baron L."/>
            <person name="Becker A."/>
            <person name="Biteau N."/>
            <person name="Bloecker H."/>
            <person name="Blugeon C."/>
            <person name="Boskovic J."/>
            <person name="Brandt P."/>
            <person name="Brueckner M."/>
            <person name="Buitrago M.J."/>
            <person name="Coster F."/>
            <person name="Delaveau T."/>
            <person name="del Rey F."/>
            <person name="Dujon B."/>
            <person name="Eide L.G."/>
            <person name="Garcia-Cantalejo J.M."/>
            <person name="Goffeau A."/>
            <person name="Gomez-Peris A."/>
            <person name="Granotier C."/>
            <person name="Hanemann V."/>
            <person name="Hankeln T."/>
            <person name="Hoheisel J.D."/>
            <person name="Jaeger W."/>
            <person name="Jimenez A."/>
            <person name="Jonniaux J.-L."/>
            <person name="Kraemer C."/>
            <person name="Kuester H."/>
            <person name="Laamanen P."/>
            <person name="Legros Y."/>
            <person name="Louis E.J."/>
            <person name="Moeller-Rieker S."/>
            <person name="Monnet A."/>
            <person name="Moro M."/>
            <person name="Mueller-Auer S."/>
            <person name="Nussbaumer B."/>
            <person name="Paricio N."/>
            <person name="Paulin L."/>
            <person name="Perea J."/>
            <person name="Perez-Alonso M."/>
            <person name="Perez-Ortin J.E."/>
            <person name="Pohl T.M."/>
            <person name="Prydz H."/>
            <person name="Purnelle B."/>
            <person name="Rasmussen S.W."/>
            <person name="Remacha M.A."/>
            <person name="Revuelta J.L."/>
            <person name="Rieger M."/>
            <person name="Salom D."/>
            <person name="Saluz H.P."/>
            <person name="Saiz J.E."/>
            <person name="Saren A.-M."/>
            <person name="Schaefer M."/>
            <person name="Scharfe M."/>
            <person name="Schmidt E.R."/>
            <person name="Schneider C."/>
            <person name="Scholler P."/>
            <person name="Schwarz S."/>
            <person name="Soler-Mira A."/>
            <person name="Urrestarazu L.A."/>
            <person name="Verhasselt P."/>
            <person name="Vissers S."/>
            <person name="Voet M."/>
            <person name="Volckaert G."/>
            <person name="Wagner G."/>
            <person name="Wambutt R."/>
            <person name="Wedler E."/>
            <person name="Wedler H."/>
            <person name="Woelfl S."/>
            <person name="Harris D.E."/>
            <person name="Bowman S."/>
            <person name="Brown D."/>
            <person name="Churcher C.M."/>
            <person name="Connor R."/>
            <person name="Dedman K."/>
            <person name="Gentles S."/>
            <person name="Hamlin N."/>
            <person name="Hunt S."/>
            <person name="Jones L."/>
            <person name="McDonald S."/>
            <person name="Murphy L.D."/>
            <person name="Niblett D."/>
            <person name="Odell C."/>
            <person name="Oliver K."/>
            <person name="Rajandream M.A."/>
            <person name="Richards C."/>
            <person name="Shore L."/>
            <person name="Walsh S.V."/>
            <person name="Barrell B.G."/>
            <person name="Dietrich F.S."/>
            <person name="Mulligan J.T."/>
            <person name="Allen E."/>
            <person name="Araujo R."/>
            <person name="Aviles E."/>
            <person name="Berno A."/>
            <person name="Carpenter J."/>
            <person name="Chen E."/>
            <person name="Cherry J.M."/>
            <person name="Chung E."/>
            <person name="Duncan M."/>
            <person name="Hunicke-Smith S."/>
            <person name="Hyman R.W."/>
            <person name="Komp C."/>
            <person name="Lashkari D."/>
            <person name="Lew H."/>
            <person name="Lin D."/>
            <person name="Mosedale D."/>
            <person name="Nakahara K."/>
            <person name="Namath A."/>
            <person name="Oefner P."/>
            <person name="Oh C."/>
            <person name="Petel F.X."/>
            <person name="Roberts D."/>
            <person name="Schramm S."/>
            <person name="Schroeder M."/>
            <person name="Shogren T."/>
            <person name="Shroff N."/>
            <person name="Winant A."/>
            <person name="Yelton M.A."/>
            <person name="Botstein D."/>
            <person name="Davis R.W."/>
            <person name="Johnston M."/>
            <person name="Andrews S."/>
            <person name="Brinkman R."/>
            <person name="Cooper J."/>
            <person name="Ding H."/>
            <person name="Du Z."/>
            <person name="Favello A."/>
            <person name="Fulton L."/>
            <person name="Gattung S."/>
            <person name="Greco T."/>
            <person name="Hallsworth K."/>
            <person name="Hawkins J."/>
            <person name="Hillier L.W."/>
            <person name="Jier M."/>
            <person name="Johnson D."/>
            <person name="Johnston L."/>
            <person name="Kirsten J."/>
            <person name="Kucaba T."/>
            <person name="Langston Y."/>
            <person name="Latreille P."/>
            <person name="Le T."/>
            <person name="Mardis E."/>
            <person name="Menezes S."/>
            <person name="Miller N."/>
            <person name="Nhan M."/>
            <person name="Pauley A."/>
            <person name="Peluso D."/>
            <person name="Rifkin L."/>
            <person name="Riles L."/>
            <person name="Taich A."/>
            <person name="Trevaskis E."/>
            <person name="Vignati D."/>
            <person name="Wilcox L."/>
            <person name="Wohldman P."/>
            <person name="Vaudin M."/>
            <person name="Wilson R."/>
            <person name="Waterston R."/>
            <person name="Albermann K."/>
            <person name="Hani J."/>
            <person name="Heumann K."/>
            <person name="Kleine K."/>
            <person name="Mewes H.-W."/>
            <person name="Zollner A."/>
            <person name="Zaccaria P."/>
        </authorList>
    </citation>
    <scope>NUCLEOTIDE SEQUENCE [LARGE SCALE GENOMIC DNA]</scope>
    <source>
        <strain>ATCC 204508 / S288c</strain>
    </source>
</reference>
<reference key="3">
    <citation type="journal article" date="2014" name="G3 (Bethesda)">
        <title>The reference genome sequence of Saccharomyces cerevisiae: Then and now.</title>
        <authorList>
            <person name="Engel S.R."/>
            <person name="Dietrich F.S."/>
            <person name="Fisk D.G."/>
            <person name="Binkley G."/>
            <person name="Balakrishnan R."/>
            <person name="Costanzo M.C."/>
            <person name="Dwight S.S."/>
            <person name="Hitz B.C."/>
            <person name="Karra K."/>
            <person name="Nash R.S."/>
            <person name="Weng S."/>
            <person name="Wong E.D."/>
            <person name="Lloyd P."/>
            <person name="Skrzypek M.S."/>
            <person name="Miyasato S.R."/>
            <person name="Simison M."/>
            <person name="Cherry J.M."/>
        </authorList>
    </citation>
    <scope>GENOME REANNOTATION</scope>
    <source>
        <strain>ATCC 204508 / S288c</strain>
    </source>
</reference>
<reference key="4">
    <citation type="journal article" date="1993" name="Proc. Natl. Acad. Sci. U.S.A.">
        <title>A protein complex of translational regulators of GCN4 mRNA is the guanine nucleotide-exchange factor for translation initiation factor 2 in yeast.</title>
        <authorList>
            <person name="Cigan A.M."/>
            <person name="Bushman J.L."/>
            <person name="Boal T.R."/>
            <person name="Hinnebusch A.G."/>
        </authorList>
    </citation>
    <scope>IDENTIFICATION IN THE EIF2-B COMPLEX</scope>
    <scope>FUNCTION OF THE EIF2-B COMPLEX</scope>
</reference>
<reference key="5">
    <citation type="journal article" date="1998" name="Genes Dev.">
        <title>eIF2 independently binds two distinct eIF2B subcomplexes that catalyze and regulate guanine-nucleotide exchange.</title>
        <authorList>
            <person name="Pavitt G.D."/>
            <person name="Ramaiah K.V."/>
            <person name="Kimball S.R."/>
            <person name="Hinnebusch A.G."/>
        </authorList>
    </citation>
    <scope>FUNCTION</scope>
    <scope>IDENTIFICATION IN A EIF2-B SUBCOMPLEX</scope>
</reference>
<reference key="6">
    <citation type="journal article" date="1999" name="EMBO J.">
        <title>Conserved bipartite motifs in yeast eIF5 and eIF2Bepsilon, GTPase-activating and GDP-GTP exchange factors in translation initiation, mediate binding to their common substrate eIF2.</title>
        <authorList>
            <person name="Asano K."/>
            <person name="Krishnamoorthy T."/>
            <person name="Phan L."/>
            <person name="Pavitt G.D."/>
            <person name="Hinnebusch A.G."/>
        </authorList>
    </citation>
    <scope>INTERACTION WITH SUI3</scope>
    <scope>MUTAGENESIS OF 655-THR--TRP-677 AND 696-TRP--GLU-706</scope>
</reference>
<reference key="7">
    <citation type="journal article" date="2000" name="Mol. Cell. Biol.">
        <title>Identification of domains and residues within the epsilon subunit of eukaryotic translation initiation factor 2B (eIF2Bepsilon) required for guanine nucleotide exchange reveals a novel activation function promoted by eIF2B complex formation.</title>
        <authorList>
            <person name="Gomez E."/>
            <person name="Pavitt G.D."/>
        </authorList>
    </citation>
    <scope>MUTAGENESIS OF THR-552 AND SER-576</scope>
</reference>
<reference key="8">
    <citation type="journal article" date="2003" name="Mol. Cell">
        <title>Assigning function to yeast proteins by integration of technologies.</title>
        <authorList>
            <person name="Hazbun T.R."/>
            <person name="Malmstroem L."/>
            <person name="Anderson S."/>
            <person name="Graczyk B.J."/>
            <person name="Fox B."/>
            <person name="Riffle M."/>
            <person name="Sundin B.A."/>
            <person name="Aranda J.D."/>
            <person name="McDonald W.H."/>
            <person name="Chiu C.-H."/>
            <person name="Snydsman B.E."/>
            <person name="Bradley P."/>
            <person name="Muller E.G.D."/>
            <person name="Fields S."/>
            <person name="Baker D."/>
            <person name="Yates J.R. III"/>
            <person name="Davis T.N."/>
        </authorList>
    </citation>
    <scope>IDENTIFICATION BY MASS SPECTROMETRY</scope>
</reference>
<reference key="9">
    <citation type="journal article" date="2003" name="Nature">
        <title>Global analysis of protein expression in yeast.</title>
        <authorList>
            <person name="Ghaemmaghami S."/>
            <person name="Huh W.-K."/>
            <person name="Bower K."/>
            <person name="Howson R.W."/>
            <person name="Belle A."/>
            <person name="Dephoure N."/>
            <person name="O'Shea E.K."/>
            <person name="Weissman J.S."/>
        </authorList>
    </citation>
    <scope>LEVEL OF PROTEIN EXPRESSION [LARGE SCALE ANALYSIS]</scope>
</reference>
<reference key="10">
    <citation type="journal article" date="2007" name="J. Proteome Res.">
        <title>Large-scale phosphorylation analysis of alpha-factor-arrested Saccharomyces cerevisiae.</title>
        <authorList>
            <person name="Li X."/>
            <person name="Gerber S.A."/>
            <person name="Rudner A.D."/>
            <person name="Beausoleil S.A."/>
            <person name="Haas W."/>
            <person name="Villen J."/>
            <person name="Elias J.E."/>
            <person name="Gygi S.P."/>
        </authorList>
    </citation>
    <scope>PHOSPHORYLATION [LARGE SCALE ANALYSIS] AT SER-478; SER-481 AND SER-507</scope>
    <scope>IDENTIFICATION BY MASS SPECTROMETRY [LARGE SCALE ANALYSIS]</scope>
    <source>
        <strain>ADR376</strain>
    </source>
</reference>
<reference key="11">
    <citation type="journal article" date="2008" name="Mol. Cell. Proteomics">
        <title>A multidimensional chromatography technology for in-depth phosphoproteome analysis.</title>
        <authorList>
            <person name="Albuquerque C.P."/>
            <person name="Smolka M.B."/>
            <person name="Payne S.H."/>
            <person name="Bafna V."/>
            <person name="Eng J."/>
            <person name="Zhou H."/>
        </authorList>
    </citation>
    <scope>PHOSPHORYLATION [LARGE SCALE ANALYSIS] AT SER-538</scope>
    <scope>IDENTIFICATION BY MASS SPECTROMETRY [LARGE SCALE ANALYSIS]</scope>
</reference>
<reference key="12">
    <citation type="journal article" date="2009" name="Science">
        <title>Global analysis of Cdk1 substrate phosphorylation sites provides insights into evolution.</title>
        <authorList>
            <person name="Holt L.J."/>
            <person name="Tuch B.B."/>
            <person name="Villen J."/>
            <person name="Johnson A.D."/>
            <person name="Gygi S.P."/>
            <person name="Morgan D.O."/>
        </authorList>
    </citation>
    <scope>PHOSPHORYLATION [LARGE SCALE ANALYSIS] AT SER-478; SER-481; SER-525; SER-538 AND SER-707</scope>
    <scope>IDENTIFICATION BY MASS SPECTROMETRY [LARGE SCALE ANALYSIS]</scope>
</reference>
<reference key="13">
    <citation type="journal article" date="2022" name="J. Biol. Chem.">
        <title>Stepwise assembly of the eukaryotic translation initiation factor 2 complex.</title>
        <authorList>
            <person name="Vanselow S."/>
            <person name="Neumann-Arnold L."/>
            <person name="Wojciech-Moock F."/>
            <person name="Seufert W."/>
        </authorList>
    </citation>
    <scope>INTERACTION WITH GCD11</scope>
</reference>
<reference key="14">
    <citation type="journal article" date="2004" name="J. Biol. Chem.">
        <title>Structure of the catalytic fragment of translation initiation factor 2B and identification of a critically important catalytic residue.</title>
        <authorList>
            <person name="Boesen T."/>
            <person name="Mohammad S.S."/>
            <person name="Pavitt G.D."/>
            <person name="Andersen G.R."/>
        </authorList>
    </citation>
    <scope>X-RAY CRYSTALLOGRAPHY (2.3 ANGSTROMS) OF 524-712</scope>
    <scope>MUTAGENESIS OF GLU-569</scope>
</reference>
<accession>P32501</accession>
<accession>D6VSJ5</accession>
<keyword id="KW-0002">3D-structure</keyword>
<keyword id="KW-0963">Cytoplasm</keyword>
<keyword id="KW-0396">Initiation factor</keyword>
<keyword id="KW-0597">Phosphoprotein</keyword>
<keyword id="KW-0648">Protein biosynthesis</keyword>
<keyword id="KW-1185">Reference proteome</keyword>
<keyword id="KW-0810">Translation regulation</keyword>